<keyword id="KW-0227">DNA damage</keyword>
<keyword id="KW-0234">DNA repair</keyword>
<keyword id="KW-0238">DNA-binding</keyword>
<keyword id="KW-0326">Glycosidase</keyword>
<keyword id="KW-0378">Hydrolase</keyword>
<keyword id="KW-0456">Lyase</keyword>
<keyword id="KW-0479">Metal-binding</keyword>
<keyword id="KW-0511">Multifunctional enzyme</keyword>
<keyword id="KW-1185">Reference proteome</keyword>
<keyword id="KW-0862">Zinc</keyword>
<keyword id="KW-0863">Zinc-finger</keyword>
<feature type="initiator methionine" description="Removed" evidence="1">
    <location>
        <position position="1"/>
    </location>
</feature>
<feature type="chain" id="PRO_1000117379" description="Formamidopyrimidine-DNA glycosylase">
    <location>
        <begin position="2"/>
        <end position="282"/>
    </location>
</feature>
<feature type="zinc finger region" description="FPG-type" evidence="2">
    <location>
        <begin position="248"/>
        <end position="282"/>
    </location>
</feature>
<feature type="active site" description="Schiff-base intermediate with DNA" evidence="2">
    <location>
        <position position="2"/>
    </location>
</feature>
<feature type="active site" description="Proton donor" evidence="2">
    <location>
        <position position="3"/>
    </location>
</feature>
<feature type="active site" description="Proton donor; for beta-elimination activity" evidence="2">
    <location>
        <position position="60"/>
    </location>
</feature>
<feature type="active site" description="Proton donor; for delta-elimination activity" evidence="2">
    <location>
        <position position="272"/>
    </location>
</feature>
<feature type="binding site" evidence="2">
    <location>
        <position position="99"/>
    </location>
    <ligand>
        <name>DNA</name>
        <dbReference type="ChEBI" id="CHEBI:16991"/>
    </ligand>
</feature>
<feature type="binding site" evidence="2">
    <location>
        <position position="118"/>
    </location>
    <ligand>
        <name>DNA</name>
        <dbReference type="ChEBI" id="CHEBI:16991"/>
    </ligand>
</feature>
<feature type="binding site" evidence="2">
    <location>
        <position position="163"/>
    </location>
    <ligand>
        <name>DNA</name>
        <dbReference type="ChEBI" id="CHEBI:16991"/>
    </ligand>
</feature>
<organism>
    <name type="scientific">Rippkaea orientalis (strain PCC 8801 / RF-1)</name>
    <name type="common">Cyanothece sp. (strain PCC 8801)</name>
    <dbReference type="NCBI Taxonomy" id="41431"/>
    <lineage>
        <taxon>Bacteria</taxon>
        <taxon>Bacillati</taxon>
        <taxon>Cyanobacteriota</taxon>
        <taxon>Cyanophyceae</taxon>
        <taxon>Oscillatoriophycideae</taxon>
        <taxon>Chroococcales</taxon>
        <taxon>Aphanothecaceae</taxon>
        <taxon>Rippkaea</taxon>
        <taxon>Rippkaea orientalis</taxon>
    </lineage>
</organism>
<sequence length="282" mass="31224">MPELPEVETVCRGLNELTSGKVIKDAEVLLPRSLASPSSVDEFLSNIRGVIFGEWQRRGKYLLGTLVKESGEAAGWLGVHLRMTGQLLWVNQSEPLQIHTRLRLFCGENKELRFVDIRTFGKVWCVPPKTTPETIITGLKKLGVEPFSDDFSDDYFTTKLNGRQRNIKTLLLDQEIVAGLGNIYADEALFKSGVHPTTLGKNLKPQQIEQLRIAIIEVLETAIEKGGTTFSDFKGVTGINGNYGGTAWVYGRTGEPCRVCGTSIERLKLGGRSAHFCPRCQA</sequence>
<gene>
    <name evidence="2" type="primary">mutM</name>
    <name evidence="2" type="synonym">fpg</name>
    <name type="ordered locus">PCC8801_0132</name>
</gene>
<accession>B7K1T1</accession>
<proteinExistence type="inferred from homology"/>
<protein>
    <recommendedName>
        <fullName evidence="2">Formamidopyrimidine-DNA glycosylase</fullName>
        <shortName evidence="2">Fapy-DNA glycosylase</shortName>
        <ecNumber evidence="2">3.2.2.23</ecNumber>
    </recommendedName>
    <alternativeName>
        <fullName evidence="2">DNA-(apurinic or apyrimidinic site) lyase MutM</fullName>
        <shortName evidence="2">AP lyase MutM</shortName>
        <ecNumber evidence="2">4.2.99.18</ecNumber>
    </alternativeName>
</protein>
<evidence type="ECO:0000250" key="1"/>
<evidence type="ECO:0000255" key="2">
    <source>
        <dbReference type="HAMAP-Rule" id="MF_00103"/>
    </source>
</evidence>
<name>FPG_RIPO1</name>
<comment type="function">
    <text evidence="2">Involved in base excision repair of DNA damaged by oxidation or by mutagenic agents. Acts as a DNA glycosylase that recognizes and removes damaged bases. Has a preference for oxidized purines, such as 7,8-dihydro-8-oxoguanine (8-oxoG). Has AP (apurinic/apyrimidinic) lyase activity and introduces nicks in the DNA strand. Cleaves the DNA backbone by beta-delta elimination to generate a single-strand break at the site of the removed base with both 3'- and 5'-phosphates.</text>
</comment>
<comment type="catalytic activity">
    <reaction evidence="2">
        <text>Hydrolysis of DNA containing ring-opened 7-methylguanine residues, releasing 2,6-diamino-4-hydroxy-5-(N-methyl)formamidopyrimidine.</text>
        <dbReference type="EC" id="3.2.2.23"/>
    </reaction>
</comment>
<comment type="catalytic activity">
    <reaction evidence="2">
        <text>2'-deoxyribonucleotide-(2'-deoxyribose 5'-phosphate)-2'-deoxyribonucleotide-DNA = a 3'-end 2'-deoxyribonucleotide-(2,3-dehydro-2,3-deoxyribose 5'-phosphate)-DNA + a 5'-end 5'-phospho-2'-deoxyribonucleoside-DNA + H(+)</text>
        <dbReference type="Rhea" id="RHEA:66592"/>
        <dbReference type="Rhea" id="RHEA-COMP:13180"/>
        <dbReference type="Rhea" id="RHEA-COMP:16897"/>
        <dbReference type="Rhea" id="RHEA-COMP:17067"/>
        <dbReference type="ChEBI" id="CHEBI:15378"/>
        <dbReference type="ChEBI" id="CHEBI:136412"/>
        <dbReference type="ChEBI" id="CHEBI:157695"/>
        <dbReference type="ChEBI" id="CHEBI:167181"/>
        <dbReference type="EC" id="4.2.99.18"/>
    </reaction>
</comment>
<comment type="cofactor">
    <cofactor evidence="2">
        <name>Zn(2+)</name>
        <dbReference type="ChEBI" id="CHEBI:29105"/>
    </cofactor>
    <text evidence="2">Binds 1 zinc ion per subunit.</text>
</comment>
<comment type="subunit">
    <text evidence="2">Monomer.</text>
</comment>
<comment type="similarity">
    <text evidence="2">Belongs to the FPG family.</text>
</comment>
<dbReference type="EC" id="3.2.2.23" evidence="2"/>
<dbReference type="EC" id="4.2.99.18" evidence="2"/>
<dbReference type="EMBL" id="CP001287">
    <property type="protein sequence ID" value="ACK64238.1"/>
    <property type="molecule type" value="Genomic_DNA"/>
</dbReference>
<dbReference type="RefSeq" id="WP_012593515.1">
    <property type="nucleotide sequence ID" value="NC_011726.1"/>
</dbReference>
<dbReference type="SMR" id="B7K1T1"/>
<dbReference type="STRING" id="41431.PCC8801_0132"/>
<dbReference type="KEGG" id="cyp:PCC8801_0132"/>
<dbReference type="eggNOG" id="COG0266">
    <property type="taxonomic scope" value="Bacteria"/>
</dbReference>
<dbReference type="HOGENOM" id="CLU_038423_1_2_3"/>
<dbReference type="OrthoDB" id="9800855at2"/>
<dbReference type="Proteomes" id="UP000008204">
    <property type="component" value="Chromosome"/>
</dbReference>
<dbReference type="GO" id="GO:0034039">
    <property type="term" value="F:8-oxo-7,8-dihydroguanine DNA N-glycosylase activity"/>
    <property type="evidence" value="ECO:0007669"/>
    <property type="project" value="TreeGrafter"/>
</dbReference>
<dbReference type="GO" id="GO:0140078">
    <property type="term" value="F:class I DNA-(apurinic or apyrimidinic site) endonuclease activity"/>
    <property type="evidence" value="ECO:0007669"/>
    <property type="project" value="UniProtKB-EC"/>
</dbReference>
<dbReference type="GO" id="GO:0003684">
    <property type="term" value="F:damaged DNA binding"/>
    <property type="evidence" value="ECO:0007669"/>
    <property type="project" value="InterPro"/>
</dbReference>
<dbReference type="GO" id="GO:0008270">
    <property type="term" value="F:zinc ion binding"/>
    <property type="evidence" value="ECO:0007669"/>
    <property type="project" value="UniProtKB-UniRule"/>
</dbReference>
<dbReference type="GO" id="GO:0006284">
    <property type="term" value="P:base-excision repair"/>
    <property type="evidence" value="ECO:0007669"/>
    <property type="project" value="InterPro"/>
</dbReference>
<dbReference type="CDD" id="cd08966">
    <property type="entry name" value="EcFpg-like_N"/>
    <property type="match status" value="1"/>
</dbReference>
<dbReference type="FunFam" id="1.10.8.50:FF:000003">
    <property type="entry name" value="Formamidopyrimidine-DNA glycosylase"/>
    <property type="match status" value="1"/>
</dbReference>
<dbReference type="Gene3D" id="1.10.8.50">
    <property type="match status" value="1"/>
</dbReference>
<dbReference type="Gene3D" id="3.20.190.10">
    <property type="entry name" value="MutM-like, N-terminal"/>
    <property type="match status" value="1"/>
</dbReference>
<dbReference type="HAMAP" id="MF_00103">
    <property type="entry name" value="Fapy_DNA_glycosyl"/>
    <property type="match status" value="1"/>
</dbReference>
<dbReference type="InterPro" id="IPR015886">
    <property type="entry name" value="DNA_glyclase/AP_lyase_DNA-bd"/>
</dbReference>
<dbReference type="InterPro" id="IPR015887">
    <property type="entry name" value="DNA_glyclase_Znf_dom_DNA_BS"/>
</dbReference>
<dbReference type="InterPro" id="IPR020629">
    <property type="entry name" value="Formamido-pyr_DNA_Glyclase"/>
</dbReference>
<dbReference type="InterPro" id="IPR012319">
    <property type="entry name" value="FPG_cat"/>
</dbReference>
<dbReference type="InterPro" id="IPR035937">
    <property type="entry name" value="MutM-like_N-ter"/>
</dbReference>
<dbReference type="InterPro" id="IPR010979">
    <property type="entry name" value="Ribosomal_uS13-like_H2TH"/>
</dbReference>
<dbReference type="InterPro" id="IPR000214">
    <property type="entry name" value="Znf_DNA_glyclase/AP_lyase"/>
</dbReference>
<dbReference type="InterPro" id="IPR010663">
    <property type="entry name" value="Znf_FPG/IleRS"/>
</dbReference>
<dbReference type="NCBIfam" id="TIGR00577">
    <property type="entry name" value="fpg"/>
    <property type="match status" value="1"/>
</dbReference>
<dbReference type="NCBIfam" id="NF002211">
    <property type="entry name" value="PRK01103.1"/>
    <property type="match status" value="1"/>
</dbReference>
<dbReference type="NCBIfam" id="NF010551">
    <property type="entry name" value="PRK13945.1"/>
    <property type="match status" value="1"/>
</dbReference>
<dbReference type="PANTHER" id="PTHR22993">
    <property type="entry name" value="FORMAMIDOPYRIMIDINE-DNA GLYCOSYLASE"/>
    <property type="match status" value="1"/>
</dbReference>
<dbReference type="PANTHER" id="PTHR22993:SF9">
    <property type="entry name" value="FORMAMIDOPYRIMIDINE-DNA GLYCOSYLASE"/>
    <property type="match status" value="1"/>
</dbReference>
<dbReference type="Pfam" id="PF01149">
    <property type="entry name" value="Fapy_DNA_glyco"/>
    <property type="match status" value="1"/>
</dbReference>
<dbReference type="Pfam" id="PF06831">
    <property type="entry name" value="H2TH"/>
    <property type="match status" value="1"/>
</dbReference>
<dbReference type="Pfam" id="PF06827">
    <property type="entry name" value="zf-FPG_IleRS"/>
    <property type="match status" value="1"/>
</dbReference>
<dbReference type="SMART" id="SM00898">
    <property type="entry name" value="Fapy_DNA_glyco"/>
    <property type="match status" value="1"/>
</dbReference>
<dbReference type="SMART" id="SM01232">
    <property type="entry name" value="H2TH"/>
    <property type="match status" value="1"/>
</dbReference>
<dbReference type="SUPFAM" id="SSF57716">
    <property type="entry name" value="Glucocorticoid receptor-like (DNA-binding domain)"/>
    <property type="match status" value="1"/>
</dbReference>
<dbReference type="SUPFAM" id="SSF81624">
    <property type="entry name" value="N-terminal domain of MutM-like DNA repair proteins"/>
    <property type="match status" value="1"/>
</dbReference>
<dbReference type="SUPFAM" id="SSF46946">
    <property type="entry name" value="S13-like H2TH domain"/>
    <property type="match status" value="1"/>
</dbReference>
<dbReference type="PROSITE" id="PS51068">
    <property type="entry name" value="FPG_CAT"/>
    <property type="match status" value="1"/>
</dbReference>
<dbReference type="PROSITE" id="PS01242">
    <property type="entry name" value="ZF_FPG_1"/>
    <property type="match status" value="1"/>
</dbReference>
<dbReference type="PROSITE" id="PS51066">
    <property type="entry name" value="ZF_FPG_2"/>
    <property type="match status" value="1"/>
</dbReference>
<reference key="1">
    <citation type="journal article" date="2011" name="MBio">
        <title>Novel metabolic attributes of the genus Cyanothece, comprising a group of unicellular nitrogen-fixing Cyanobacteria.</title>
        <authorList>
            <person name="Bandyopadhyay A."/>
            <person name="Elvitigala T."/>
            <person name="Welsh E."/>
            <person name="Stockel J."/>
            <person name="Liberton M."/>
            <person name="Min H."/>
            <person name="Sherman L.A."/>
            <person name="Pakrasi H.B."/>
        </authorList>
    </citation>
    <scope>NUCLEOTIDE SEQUENCE [LARGE SCALE GENOMIC DNA]</scope>
    <source>
        <strain>PCC 8801 / RF-1</strain>
    </source>
</reference>